<gene>
    <name type="primary">hop</name>
</gene>
<organism>
    <name type="scientific">Natronomonas pharaonis</name>
    <name type="common">Natronobacterium pharaonis</name>
    <dbReference type="NCBI Taxonomy" id="2257"/>
    <lineage>
        <taxon>Archaea</taxon>
        <taxon>Methanobacteriati</taxon>
        <taxon>Methanobacteriota</taxon>
        <taxon>Stenosarchaea group</taxon>
        <taxon>Halobacteria</taxon>
        <taxon>Halobacteriales</taxon>
        <taxon>Haloarculaceae</taxon>
        <taxon>Natronomonas</taxon>
    </lineage>
</organism>
<sequence>MTETLPPVTESAVALQAEVTQRELFEFVLNDPLLASSLYINIALAGLSILLFVFMTRGLDDPRAKLIAVSTILVPVVSIASYTGLASGLTISVLEMPAGHFAEGSSVMLGGEEVDGVVTMWGRYLTWALSTPMILLALGLLAGSNATKLFTAITFDIAMCVTGLAAALTTSSHLMRWFWYAISCACFLVVLYILLVEWAQDAKAAGTADMFNTLKLLTVVMWLGYPIVWALGVEGIAVLPVGVTSWGYSFLDIVAKYIFAFLLLNYLTSNESVVSGSILDVPSASGTPADD</sequence>
<protein>
    <recommendedName>
        <fullName>Halorhodopsin</fullName>
        <shortName>HR</shortName>
    </recommendedName>
    <alternativeName>
        <fullName>NpHR</fullName>
    </alternativeName>
</protein>
<keyword id="KW-0002">3D-structure</keyword>
<keyword id="KW-1003">Cell membrane</keyword>
<keyword id="KW-0157">Chromophore</keyword>
<keyword id="KW-0903">Direct protein sequencing</keyword>
<keyword id="KW-0406">Ion transport</keyword>
<keyword id="KW-0472">Membrane</keyword>
<keyword id="KW-0600">Photoreceptor protein</keyword>
<keyword id="KW-0675">Receptor</keyword>
<keyword id="KW-0681">Retinal protein</keyword>
<keyword id="KW-0716">Sensory transduction</keyword>
<keyword id="KW-0812">Transmembrane</keyword>
<keyword id="KW-1133">Transmembrane helix</keyword>
<keyword id="KW-0813">Transport</keyword>
<evidence type="ECO:0000250" key="1"/>
<evidence type="ECO:0000305" key="2"/>
<evidence type="ECO:0007829" key="3">
    <source>
        <dbReference type="PDB" id="3QBG"/>
    </source>
</evidence>
<evidence type="ECO:0007829" key="4">
    <source>
        <dbReference type="PDB" id="3QBL"/>
    </source>
</evidence>
<feature type="chain" id="PRO_0000196268" description="Halorhodopsin">
    <location>
        <begin position="1"/>
        <end position="291"/>
    </location>
</feature>
<feature type="topological domain" description="Extracellular" evidence="1">
    <location>
        <begin position="1"/>
        <end position="30"/>
    </location>
</feature>
<feature type="transmembrane region" description="Helical; Name=Helix A" evidence="1">
    <location>
        <begin position="31"/>
        <end position="56"/>
    </location>
</feature>
<feature type="topological domain" description="Cytoplasmic" evidence="1">
    <location>
        <begin position="57"/>
        <end position="62"/>
    </location>
</feature>
<feature type="transmembrane region" description="Helical; Name=Helix B" evidence="1">
    <location>
        <begin position="63"/>
        <end position="86"/>
    </location>
</feature>
<feature type="topological domain" description="Extracellular" evidence="1">
    <location>
        <begin position="87"/>
        <end position="120"/>
    </location>
</feature>
<feature type="transmembrane region" description="Helical; Name=Helix C" evidence="1">
    <location>
        <begin position="121"/>
        <end position="142"/>
    </location>
</feature>
<feature type="topological domain" description="Cytoplasmic" evidence="1">
    <location>
        <begin position="143"/>
        <end position="145"/>
    </location>
</feature>
<feature type="transmembrane region" description="Helical; Name=Helix D" evidence="1">
    <location>
        <begin position="146"/>
        <end position="169"/>
    </location>
</feature>
<feature type="topological domain" description="Extracellular" evidence="1">
    <location>
        <begin position="170"/>
        <end position="172"/>
    </location>
</feature>
<feature type="transmembrane region" description="Helical; Name=Helix E" evidence="1">
    <location>
        <begin position="173"/>
        <end position="195"/>
    </location>
</feature>
<feature type="topological domain" description="Cytoplasmic" evidence="1">
    <location>
        <begin position="196"/>
        <end position="207"/>
    </location>
</feature>
<feature type="transmembrane region" description="Helical; Name=Helix F" evidence="1">
    <location>
        <begin position="208"/>
        <end position="231"/>
    </location>
</feature>
<feature type="topological domain" description="Extracellular" evidence="1">
    <location>
        <begin position="232"/>
        <end position="240"/>
    </location>
</feature>
<feature type="transmembrane region" description="Helical; Name=Helix G" evidence="1">
    <location>
        <begin position="241"/>
        <end position="269"/>
    </location>
</feature>
<feature type="topological domain" description="Cytoplasmic" evidence="1">
    <location>
        <begin position="270"/>
        <end position="291"/>
    </location>
</feature>
<feature type="modified residue" description="N6-(retinylidene)lysine" evidence="1">
    <location>
        <position position="256"/>
    </location>
</feature>
<feature type="helix" evidence="3">
    <location>
        <begin position="21"/>
        <end position="28"/>
    </location>
</feature>
<feature type="helix" evidence="3">
    <location>
        <begin position="32"/>
        <end position="55"/>
    </location>
</feature>
<feature type="turn" evidence="3">
    <location>
        <begin position="56"/>
        <end position="58"/>
    </location>
</feature>
<feature type="helix" evidence="3">
    <location>
        <begin position="62"/>
        <end position="86"/>
    </location>
</feature>
<feature type="turn" evidence="3">
    <location>
        <begin position="87"/>
        <end position="90"/>
    </location>
</feature>
<feature type="strand" evidence="3">
    <location>
        <begin position="92"/>
        <end position="94"/>
    </location>
</feature>
<feature type="turn" evidence="3">
    <location>
        <begin position="101"/>
        <end position="104"/>
    </location>
</feature>
<feature type="strand" evidence="4">
    <location>
        <begin position="110"/>
        <end position="112"/>
    </location>
</feature>
<feature type="strand" evidence="3">
    <location>
        <begin position="115"/>
        <end position="119"/>
    </location>
</feature>
<feature type="helix" evidence="3">
    <location>
        <begin position="122"/>
        <end position="141"/>
    </location>
</feature>
<feature type="helix" evidence="3">
    <location>
        <begin position="146"/>
        <end position="168"/>
    </location>
</feature>
<feature type="helix" evidence="3">
    <location>
        <begin position="173"/>
        <end position="195"/>
    </location>
</feature>
<feature type="helix" evidence="3">
    <location>
        <begin position="197"/>
        <end position="205"/>
    </location>
</feature>
<feature type="helix" evidence="3">
    <location>
        <begin position="208"/>
        <end position="231"/>
    </location>
</feature>
<feature type="turn" evidence="3">
    <location>
        <begin position="233"/>
        <end position="236"/>
    </location>
</feature>
<feature type="helix" evidence="3">
    <location>
        <begin position="241"/>
        <end position="255"/>
    </location>
</feature>
<feature type="helix" evidence="3">
    <location>
        <begin position="257"/>
        <end position="267"/>
    </location>
</feature>
<feature type="helix" evidence="3">
    <location>
        <begin position="271"/>
        <end position="275"/>
    </location>
</feature>
<accession>P15647</accession>
<name>BACH_NATPH</name>
<dbReference type="EMBL" id="J05199">
    <property type="protein sequence ID" value="AAA72222.1"/>
    <property type="molecule type" value="Genomic_DNA"/>
</dbReference>
<dbReference type="PIR" id="A35002">
    <property type="entry name" value="A35002"/>
</dbReference>
<dbReference type="PDB" id="3QBG">
    <property type="method" value="X-ray"/>
    <property type="resolution" value="1.80 A"/>
    <property type="chains" value="A/B/D=1-291"/>
</dbReference>
<dbReference type="PDB" id="3QBI">
    <property type="method" value="X-ray"/>
    <property type="resolution" value="2.10 A"/>
    <property type="chains" value="A/B/D=1-291"/>
</dbReference>
<dbReference type="PDB" id="3QBK">
    <property type="method" value="X-ray"/>
    <property type="resolution" value="2.20 A"/>
    <property type="chains" value="A/B/D=1-291"/>
</dbReference>
<dbReference type="PDB" id="3QBL">
    <property type="method" value="X-ray"/>
    <property type="resolution" value="2.20 A"/>
    <property type="chains" value="A/B/D=1-291"/>
</dbReference>
<dbReference type="PDB" id="3VVK">
    <property type="method" value="X-ray"/>
    <property type="resolution" value="2.30 A"/>
    <property type="chains" value="A/B/C/D/E/F=1-291"/>
</dbReference>
<dbReference type="PDBsum" id="3QBG"/>
<dbReference type="PDBsum" id="3QBI"/>
<dbReference type="PDBsum" id="3QBK"/>
<dbReference type="PDBsum" id="3QBL"/>
<dbReference type="PDBsum" id="3VVK"/>
<dbReference type="SMR" id="P15647"/>
<dbReference type="TCDB" id="3.E.1.2.2">
    <property type="family name" value="the ion-translocating microbial rhodopsin (mr) family"/>
</dbReference>
<dbReference type="EvolutionaryTrace" id="P15647"/>
<dbReference type="GO" id="GO:0005886">
    <property type="term" value="C:plasma membrane"/>
    <property type="evidence" value="ECO:0007669"/>
    <property type="project" value="UniProtKB-SubCell"/>
</dbReference>
<dbReference type="GO" id="GO:0005216">
    <property type="term" value="F:monoatomic ion channel activity"/>
    <property type="evidence" value="ECO:0007669"/>
    <property type="project" value="InterPro"/>
</dbReference>
<dbReference type="GO" id="GO:0009881">
    <property type="term" value="F:photoreceptor activity"/>
    <property type="evidence" value="ECO:0007669"/>
    <property type="project" value="UniProtKB-KW"/>
</dbReference>
<dbReference type="GO" id="GO:0007602">
    <property type="term" value="P:phototransduction"/>
    <property type="evidence" value="ECO:0007669"/>
    <property type="project" value="UniProtKB-KW"/>
</dbReference>
<dbReference type="CDD" id="cd15243">
    <property type="entry name" value="7tm_Halorhodopsin"/>
    <property type="match status" value="1"/>
</dbReference>
<dbReference type="Gene3D" id="1.20.1070.10">
    <property type="entry name" value="Rhodopsin 7-helix transmembrane proteins"/>
    <property type="match status" value="1"/>
</dbReference>
<dbReference type="InterPro" id="IPR001425">
    <property type="entry name" value="Arc/bac/fun_rhodopsins"/>
</dbReference>
<dbReference type="InterPro" id="IPR018229">
    <property type="entry name" value="Rhodopsin_retinal_BS"/>
</dbReference>
<dbReference type="PANTHER" id="PTHR28286">
    <property type="match status" value="1"/>
</dbReference>
<dbReference type="PANTHER" id="PTHR28286:SF2">
    <property type="entry name" value="BACTERIORHODOPSIN _OPSIN, NOPA (EUROFUNG)"/>
    <property type="match status" value="1"/>
</dbReference>
<dbReference type="Pfam" id="PF01036">
    <property type="entry name" value="Bac_rhodopsin"/>
    <property type="match status" value="1"/>
</dbReference>
<dbReference type="PRINTS" id="PR00251">
    <property type="entry name" value="BACTRLOPSIN"/>
</dbReference>
<dbReference type="SMART" id="SM01021">
    <property type="entry name" value="Bac_rhodopsin"/>
    <property type="match status" value="1"/>
</dbReference>
<dbReference type="SUPFAM" id="SSF81321">
    <property type="entry name" value="Family A G protein-coupled receptor-like"/>
    <property type="match status" value="1"/>
</dbReference>
<dbReference type="PROSITE" id="PS00950">
    <property type="entry name" value="BACTERIAL_OPSIN_1"/>
    <property type="match status" value="1"/>
</dbReference>
<dbReference type="PROSITE" id="PS00327">
    <property type="entry name" value="BACTERIAL_OPSIN_RET"/>
    <property type="match status" value="1"/>
</dbReference>
<reference key="1">
    <citation type="journal article" date="1990" name="J. Biol. Chem.">
        <title>The primary structure of a halorhodopsin from Natronobacterium pharaonis. Structural, functional and evolutionary implications for bacterial rhodopsins and halorhodopsins.</title>
        <authorList>
            <person name="Lanyi J.K."/>
            <person name="Duschl A."/>
            <person name="Hatfield G.W."/>
            <person name="May K."/>
            <person name="Oesterhelt D."/>
        </authorList>
    </citation>
    <scope>NUCLEOTIDE SEQUENCE [GENOMIC DNA]</scope>
    <scope>PARTIAL PROTEIN SEQUENCE</scope>
    <source>
        <strain>SP-1 / 28</strain>
        <strain>SP-1W</strain>
    </source>
</reference>
<reference key="2">
    <citation type="journal article" date="1994" name="Biochemistry">
        <title>Blue halorhodopsin from Natronobacterium pharaonis: wavelength regulation by anions.</title>
        <authorList>
            <person name="Scharf B."/>
            <person name="Engelhard M."/>
        </authorList>
    </citation>
    <scope>SPECTROPHOTOMETRIC STUDIES</scope>
    <source>
        <strain>SP-1 / 28</strain>
    </source>
</reference>
<proteinExistence type="evidence at protein level"/>
<comment type="function">
    <text>Light-driven anion pump. Binding affinity for the anions is in the order, bromide &gt; chloride &gt; nitrate &gt; azide &gt; bromate and binding is pH dependent.</text>
</comment>
<comment type="biophysicochemical properties">
    <absorption>
        <max>~600 nm</max>
        <text>In the presence of anions, the maximum absorption shifts to about 577 nm.</text>
    </absorption>
</comment>
<comment type="subcellular location">
    <subcellularLocation>
        <location>Cell membrane</location>
        <topology>Multi-pass membrane protein</topology>
    </subcellularLocation>
</comment>
<comment type="similarity">
    <text evidence="2">Belongs to the archaeal/bacterial/fungal opsin family.</text>
</comment>